<comment type="function">
    <text evidence="1">Is probably a protein kinase regulator of UbiI activity which is involved in aerobic coenzyme Q (ubiquinone) biosynthesis.</text>
</comment>
<comment type="pathway">
    <text>Cofactor biosynthesis; ubiquinone biosynthesis [regulation].</text>
</comment>
<comment type="subcellular location">
    <subcellularLocation>
        <location evidence="1">Cell inner membrane</location>
        <topology evidence="1">Single-pass membrane protein</topology>
    </subcellularLocation>
</comment>
<comment type="similarity">
    <text evidence="1">Belongs to the ABC1 family. UbiB subfamily.</text>
</comment>
<organism>
    <name type="scientific">Edwardsiella ictaluri (strain 93-146)</name>
    <dbReference type="NCBI Taxonomy" id="634503"/>
    <lineage>
        <taxon>Bacteria</taxon>
        <taxon>Pseudomonadati</taxon>
        <taxon>Pseudomonadota</taxon>
        <taxon>Gammaproteobacteria</taxon>
        <taxon>Enterobacterales</taxon>
        <taxon>Hafniaceae</taxon>
        <taxon>Edwardsiella</taxon>
    </lineage>
</organism>
<dbReference type="EC" id="2.7.-.-" evidence="1"/>
<dbReference type="EMBL" id="CP001600">
    <property type="protein sequence ID" value="ACR67397.1"/>
    <property type="molecule type" value="Genomic_DNA"/>
</dbReference>
<dbReference type="RefSeq" id="WP_015869613.1">
    <property type="nucleotide sequence ID" value="NZ_CP169062.1"/>
</dbReference>
<dbReference type="SMR" id="C5BCA6"/>
<dbReference type="STRING" id="67780.B6E78_11860"/>
<dbReference type="GeneID" id="69537249"/>
<dbReference type="KEGG" id="eic:NT01EI_0142"/>
<dbReference type="PATRIC" id="fig|634503.3.peg.133"/>
<dbReference type="HOGENOM" id="CLU_006533_0_0_6"/>
<dbReference type="OrthoDB" id="9795390at2"/>
<dbReference type="UniPathway" id="UPA00232"/>
<dbReference type="Proteomes" id="UP000001485">
    <property type="component" value="Chromosome"/>
</dbReference>
<dbReference type="GO" id="GO:0005886">
    <property type="term" value="C:plasma membrane"/>
    <property type="evidence" value="ECO:0007669"/>
    <property type="project" value="UniProtKB-SubCell"/>
</dbReference>
<dbReference type="GO" id="GO:0005524">
    <property type="term" value="F:ATP binding"/>
    <property type="evidence" value="ECO:0007669"/>
    <property type="project" value="UniProtKB-KW"/>
</dbReference>
<dbReference type="GO" id="GO:0004672">
    <property type="term" value="F:protein kinase activity"/>
    <property type="evidence" value="ECO:0007669"/>
    <property type="project" value="UniProtKB-UniRule"/>
</dbReference>
<dbReference type="GO" id="GO:0010795">
    <property type="term" value="P:regulation of ubiquinone biosynthetic process"/>
    <property type="evidence" value="ECO:0007669"/>
    <property type="project" value="UniProtKB-UniRule"/>
</dbReference>
<dbReference type="GO" id="GO:0006744">
    <property type="term" value="P:ubiquinone biosynthetic process"/>
    <property type="evidence" value="ECO:0007669"/>
    <property type="project" value="UniProtKB-UniPathway"/>
</dbReference>
<dbReference type="CDD" id="cd13972">
    <property type="entry name" value="UbiB"/>
    <property type="match status" value="1"/>
</dbReference>
<dbReference type="HAMAP" id="MF_00414">
    <property type="entry name" value="UbiB"/>
    <property type="match status" value="1"/>
</dbReference>
<dbReference type="InterPro" id="IPR004147">
    <property type="entry name" value="ABC1_dom"/>
</dbReference>
<dbReference type="InterPro" id="IPR011009">
    <property type="entry name" value="Kinase-like_dom_sf"/>
</dbReference>
<dbReference type="InterPro" id="IPR010232">
    <property type="entry name" value="UbiB"/>
</dbReference>
<dbReference type="InterPro" id="IPR045308">
    <property type="entry name" value="UbiB_bact"/>
</dbReference>
<dbReference type="InterPro" id="IPR050154">
    <property type="entry name" value="UbiB_kinase"/>
</dbReference>
<dbReference type="NCBIfam" id="NF003404">
    <property type="entry name" value="PRK04750.1"/>
    <property type="match status" value="1"/>
</dbReference>
<dbReference type="NCBIfam" id="TIGR01982">
    <property type="entry name" value="UbiB"/>
    <property type="match status" value="1"/>
</dbReference>
<dbReference type="PANTHER" id="PTHR10566">
    <property type="entry name" value="CHAPERONE-ACTIVITY OF BC1 COMPLEX CABC1 -RELATED"/>
    <property type="match status" value="1"/>
</dbReference>
<dbReference type="PANTHER" id="PTHR10566:SF113">
    <property type="entry name" value="PROTEIN ACTIVITY OF BC1 COMPLEX KINASE 7, CHLOROPLASTIC"/>
    <property type="match status" value="1"/>
</dbReference>
<dbReference type="Pfam" id="PF03109">
    <property type="entry name" value="ABC1"/>
    <property type="match status" value="1"/>
</dbReference>
<dbReference type="SUPFAM" id="SSF56112">
    <property type="entry name" value="Protein kinase-like (PK-like)"/>
    <property type="match status" value="1"/>
</dbReference>
<sequence>MTPSELRRLCLIIRVFLAYGLDELIPLMRITLPLRIGRRCLFWMRNRHGDKPLGERLRLALQTLGPVWIKFGQMLSTRRDLFAPAIADQLALLQDRVAPFDGALARRQIEASLGGPLEQWFDDFDSQALASASIAQVHTATLRENGREVVLKVIRPDIQPIIRADVRLMYRLAGWVPKLLPDGRRLRPREVVREYEKTLLDELNLLREAANAIQLRRNFDASPMLYIPEVFSDYCRESVLVMERIYGVPVSDIAALRAQNTNMKLLAERGVQVFFTQVFRDSFFHADMHPGNIFVSYEHPQDPQYIGIDCGIVGSLNKADKRYLAENFIAFFNRDYRKVAELHVDSGWVPPDTNIEEFEFAIRTVCEPIFEKPLDQISFGHVLLNLFNTARRFNMEVQPQLVLLQKTLLYVEGLGRQLYPQLDLWTTAKPFLENWLHDQVGLPALMRALKAKAPYWSEKLPELPELLYDSLQQQRRLQHSMDSMTHRLGQQGSRQGRARYLFGIGATLLLSGTILTMVNIALWPIGLYVAGGVIWLAGWRYTR</sequence>
<gene>
    <name evidence="1" type="primary">ubiB</name>
    <name type="ordered locus">NT01EI_0142</name>
</gene>
<reference key="1">
    <citation type="submission" date="2009-03" db="EMBL/GenBank/DDBJ databases">
        <title>Complete genome sequence of Edwardsiella ictaluri 93-146.</title>
        <authorList>
            <person name="Williams M.L."/>
            <person name="Gillaspy A.F."/>
            <person name="Dyer D.W."/>
            <person name="Thune R.L."/>
            <person name="Waldbieser G.C."/>
            <person name="Schuster S.C."/>
            <person name="Gipson J."/>
            <person name="Zaitshik J."/>
            <person name="Landry C."/>
            <person name="Lawrence M.L."/>
        </authorList>
    </citation>
    <scope>NUCLEOTIDE SEQUENCE [LARGE SCALE GENOMIC DNA]</scope>
    <source>
        <strain>93-146</strain>
    </source>
</reference>
<feature type="chain" id="PRO_1000206014" description="Probable protein kinase UbiB">
    <location>
        <begin position="1"/>
        <end position="543"/>
    </location>
</feature>
<feature type="transmembrane region" description="Helical" evidence="1">
    <location>
        <begin position="517"/>
        <end position="537"/>
    </location>
</feature>
<feature type="domain" description="Protein kinase" evidence="1">
    <location>
        <begin position="123"/>
        <end position="501"/>
    </location>
</feature>
<feature type="active site" description="Proton acceptor" evidence="1">
    <location>
        <position position="287"/>
    </location>
</feature>
<feature type="binding site" evidence="1">
    <location>
        <begin position="129"/>
        <end position="137"/>
    </location>
    <ligand>
        <name>ATP</name>
        <dbReference type="ChEBI" id="CHEBI:30616"/>
    </ligand>
</feature>
<feature type="binding site" evidence="1">
    <location>
        <position position="152"/>
    </location>
    <ligand>
        <name>ATP</name>
        <dbReference type="ChEBI" id="CHEBI:30616"/>
    </ligand>
</feature>
<proteinExistence type="inferred from homology"/>
<name>UBIB_EDWI9</name>
<evidence type="ECO:0000255" key="1">
    <source>
        <dbReference type="HAMAP-Rule" id="MF_00414"/>
    </source>
</evidence>
<accession>C5BCA6</accession>
<keyword id="KW-0067">ATP-binding</keyword>
<keyword id="KW-0997">Cell inner membrane</keyword>
<keyword id="KW-1003">Cell membrane</keyword>
<keyword id="KW-0418">Kinase</keyword>
<keyword id="KW-0472">Membrane</keyword>
<keyword id="KW-0547">Nucleotide-binding</keyword>
<keyword id="KW-0808">Transferase</keyword>
<keyword id="KW-0812">Transmembrane</keyword>
<keyword id="KW-1133">Transmembrane helix</keyword>
<keyword id="KW-0831">Ubiquinone biosynthesis</keyword>
<protein>
    <recommendedName>
        <fullName evidence="1">Probable protein kinase UbiB</fullName>
        <ecNumber evidence="1">2.7.-.-</ecNumber>
    </recommendedName>
    <alternativeName>
        <fullName evidence="1">Ubiquinone biosynthesis protein UbiB</fullName>
    </alternativeName>
</protein>